<organismHost>
    <name type="scientific">Gallus gallus</name>
    <name type="common">Chicken</name>
    <dbReference type="NCBI Taxonomy" id="9031"/>
</organismHost>
<evidence type="ECO:0000255" key="1">
    <source>
        <dbReference type="HAMAP-Rule" id="MF_04097"/>
    </source>
</evidence>
<evidence type="ECO:0000255" key="2">
    <source>
        <dbReference type="PROSITE-ProRule" id="PRU01276"/>
    </source>
</evidence>
<evidence type="ECO:0000255" key="3">
    <source>
        <dbReference type="PROSITE-ProRule" id="PRU01277"/>
    </source>
</evidence>
<evidence type="ECO:0000256" key="4">
    <source>
        <dbReference type="SAM" id="MobiDB-lite"/>
    </source>
</evidence>
<feature type="chain" id="PRO_0000105983" description="Nucleoprotein">
    <location>
        <begin position="1"/>
        <end position="409"/>
    </location>
</feature>
<feature type="domain" description="CoV N NTD" evidence="2">
    <location>
        <begin position="31"/>
        <end position="156"/>
    </location>
</feature>
<feature type="domain" description="CoV N CTD" evidence="3">
    <location>
        <begin position="215"/>
        <end position="331"/>
    </location>
</feature>
<feature type="region of interest" description="Disordered" evidence="4">
    <location>
        <begin position="1"/>
        <end position="31"/>
    </location>
</feature>
<feature type="region of interest" description="RNA-binding" evidence="1">
    <location>
        <begin position="29"/>
        <end position="160"/>
    </location>
</feature>
<feature type="region of interest" description="Disordered" evidence="4">
    <location>
        <begin position="44"/>
        <end position="84"/>
    </location>
</feature>
<feature type="region of interest" description="Disordered" evidence="4">
    <location>
        <begin position="164"/>
        <end position="196"/>
    </location>
</feature>
<feature type="region of interest" description="Dimerization" evidence="1">
    <location>
        <begin position="226"/>
        <end position="333"/>
    </location>
</feature>
<feature type="region of interest" description="Disordered" evidence="4">
    <location>
        <begin position="238"/>
        <end position="258"/>
    </location>
</feature>
<feature type="region of interest" description="Disordered" evidence="4">
    <location>
        <begin position="326"/>
        <end position="409"/>
    </location>
</feature>
<feature type="compositionally biased region" description="Low complexity" evidence="4">
    <location>
        <begin position="15"/>
        <end position="31"/>
    </location>
</feature>
<feature type="compositionally biased region" description="Basic residues" evidence="4">
    <location>
        <begin position="70"/>
        <end position="84"/>
    </location>
</feature>
<feature type="compositionally biased region" description="Low complexity" evidence="4">
    <location>
        <begin position="166"/>
        <end position="179"/>
    </location>
</feature>
<feature type="compositionally biased region" description="Basic and acidic residues" evidence="4">
    <location>
        <begin position="180"/>
        <end position="192"/>
    </location>
</feature>
<feature type="compositionally biased region" description="Basic and acidic residues" evidence="4">
    <location>
        <begin position="247"/>
        <end position="258"/>
    </location>
</feature>
<feature type="compositionally biased region" description="Basic residues" evidence="4">
    <location>
        <begin position="358"/>
        <end position="367"/>
    </location>
</feature>
<feature type="compositionally biased region" description="Basic and acidic residues" evidence="4">
    <location>
        <begin position="368"/>
        <end position="384"/>
    </location>
</feature>
<feature type="modified residue" description="Phosphoserine; by host" evidence="1">
    <location>
        <position position="190"/>
    </location>
</feature>
<feature type="modified residue" description="Phosphoserine; by host" evidence="1">
    <location>
        <position position="192"/>
    </location>
</feature>
<feature type="modified residue" description="Phosphothreonine; by host" evidence="1">
    <location>
        <position position="378"/>
    </location>
</feature>
<feature type="modified residue" description="Phosphoserine; by host" evidence="1">
    <location>
        <position position="379"/>
    </location>
</feature>
<feature type="disulfide bond" evidence="1">
    <location>
        <begin position="320"/>
        <end position="323"/>
    </location>
</feature>
<feature type="sequence conflict" description="In Ref. 2; AAK91809." ref="2">
    <original>A</original>
    <variation>T</variation>
    <location>
        <position position="7"/>
    </location>
</feature>
<feature type="sequence conflict" description="In Ref. 2; AAK91809." ref="2">
    <original>F</original>
    <variation>L</variation>
    <location>
        <position position="253"/>
    </location>
</feature>
<protein>
    <recommendedName>
        <fullName evidence="1">Nucleoprotein</fullName>
    </recommendedName>
    <alternativeName>
        <fullName evidence="1">Nucleocapsid protein</fullName>
        <shortName evidence="1">NC</shortName>
        <shortName evidence="1">Protein N</shortName>
    </alternativeName>
</protein>
<reference key="1">
    <citation type="submission" date="2001-02" db="EMBL/GenBank/DDBJ databases">
        <title>N gene of infectious bronchitis virus H52 strain.</title>
        <authorList>
            <person name="Zhou J."/>
            <person name="Ding H."/>
            <person name="Shen X."/>
        </authorList>
    </citation>
    <scope>NUCLEOTIDE SEQUENCE [GENOMIC RNA]</scope>
</reference>
<reference key="2">
    <citation type="submission" date="2001-07" db="EMBL/GenBank/DDBJ databases">
        <title>Study on genetic relationship of N gene of domestic IBV vaccine strains.</title>
        <authorList>
            <person name="Cao W.S."/>
            <person name="Liao M."/>
            <person name="Ren T."/>
            <person name="Xin C.A."/>
        </authorList>
    </citation>
    <scope>NUCLEOTIDE SEQUENCE [MRNA]</scope>
    <source>
        <strain>Isolate H52-GD</strain>
    </source>
</reference>
<comment type="function">
    <text evidence="1">Packages the positive strand viral genome RNA into a helical ribonucleocapsid (RNP) and plays a fundamental role during virion assembly through its interactions with the viral genome and membrane protein M. Plays an important role in enhancing the efficiency of subgenomic viral RNA transcription as well as viral replication.</text>
</comment>
<comment type="subunit">
    <text evidence="1">Homooligomer. Both monomeric and oligomeric forms interact with RNA. Interacts with protein M. Interacts with NSP3; this interaction serves to tether the genome to the newly translated replicase-transcriptase complex at a very early stage of infection.</text>
</comment>
<comment type="subcellular location">
    <subcellularLocation>
        <location evidence="1">Virion</location>
    </subcellularLocation>
    <subcellularLocation>
        <location evidence="1">Host endoplasmic reticulum-Golgi intermediate compartment</location>
    </subcellularLocation>
    <subcellularLocation>
        <location evidence="1">Host Golgi apparatus</location>
    </subcellularLocation>
    <text evidence="1">Located inside the virion, complexed with the viral RNA. Probably associates with ER-derived membranes where it participates in viral RNA synthesis and virus budding.</text>
</comment>
<comment type="PTM">
    <text evidence="1">ADP-ribosylated. The ADP-ribosylation is retained in the virion during infection.</text>
</comment>
<comment type="PTM">
    <text evidence="1">Phosphorylated on serine and threonine residues.</text>
</comment>
<comment type="similarity">
    <text evidence="1">Belongs to the gammacoronavirus nucleocapsid protein family.</text>
</comment>
<organism>
    <name type="scientific">Avian infectious bronchitis virus (strain H52)</name>
    <name type="common">IBV</name>
    <dbReference type="NCBI Taxonomy" id="231425"/>
    <lineage>
        <taxon>Viruses</taxon>
        <taxon>Riboviria</taxon>
        <taxon>Orthornavirae</taxon>
        <taxon>Pisuviricota</taxon>
        <taxon>Pisoniviricetes</taxon>
        <taxon>Nidovirales</taxon>
        <taxon>Cornidovirineae</taxon>
        <taxon>Coronaviridae</taxon>
        <taxon>Orthocoronavirinae</taxon>
        <taxon>Gammacoronavirus</taxon>
        <taxon>Igacovirus</taxon>
        <taxon>Avian coronavirus</taxon>
    </lineage>
</organism>
<name>NCAP_IBVH5</name>
<accession>Q98Y32</accession>
<accession>Q91GB6</accession>
<proteinExistence type="evidence at transcript level"/>
<dbReference type="EMBL" id="AF352310">
    <property type="protein sequence ID" value="AAK27163.1"/>
    <property type="molecule type" value="Genomic_RNA"/>
</dbReference>
<dbReference type="EMBL" id="AY044185">
    <property type="protein sequence ID" value="AAK91809.1"/>
    <property type="molecule type" value="mRNA"/>
</dbReference>
<dbReference type="SMR" id="Q98Y32"/>
<dbReference type="GO" id="GO:0044172">
    <property type="term" value="C:host cell endoplasmic reticulum-Golgi intermediate compartment"/>
    <property type="evidence" value="ECO:0007669"/>
    <property type="project" value="UniProtKB-SubCell"/>
</dbReference>
<dbReference type="GO" id="GO:0044177">
    <property type="term" value="C:host cell Golgi apparatus"/>
    <property type="evidence" value="ECO:0007669"/>
    <property type="project" value="UniProtKB-SubCell"/>
</dbReference>
<dbReference type="GO" id="GO:1990904">
    <property type="term" value="C:ribonucleoprotein complex"/>
    <property type="evidence" value="ECO:0007669"/>
    <property type="project" value="UniProtKB-KW"/>
</dbReference>
<dbReference type="GO" id="GO:0019013">
    <property type="term" value="C:viral nucleocapsid"/>
    <property type="evidence" value="ECO:0007669"/>
    <property type="project" value="UniProtKB-UniRule"/>
</dbReference>
<dbReference type="GO" id="GO:0003723">
    <property type="term" value="F:RNA binding"/>
    <property type="evidence" value="ECO:0007669"/>
    <property type="project" value="UniProtKB-UniRule"/>
</dbReference>
<dbReference type="CDD" id="cd21595">
    <property type="entry name" value="CoV_N-CTD"/>
    <property type="match status" value="1"/>
</dbReference>
<dbReference type="CDD" id="cd21554">
    <property type="entry name" value="CoV_N-NTD"/>
    <property type="match status" value="1"/>
</dbReference>
<dbReference type="HAMAP" id="MF_04097">
    <property type="entry name" value="GAMMA_CORONA_NCAP"/>
    <property type="match status" value="1"/>
</dbReference>
<dbReference type="InterPro" id="IPR044344">
    <property type="entry name" value="N_prot_C_CoV"/>
</dbReference>
<dbReference type="InterPro" id="IPR044345">
    <property type="entry name" value="N_prot_N_CoV"/>
</dbReference>
<dbReference type="InterPro" id="IPR042547">
    <property type="entry name" value="NCAP_gCoV"/>
</dbReference>
<dbReference type="InterPro" id="IPR001218">
    <property type="entry name" value="Nucleocap_CoV"/>
</dbReference>
<dbReference type="InterPro" id="IPR037179">
    <property type="entry name" value="Nucleocapsid_C"/>
</dbReference>
<dbReference type="InterPro" id="IPR037195">
    <property type="entry name" value="Nucleocapsid_N"/>
</dbReference>
<dbReference type="Pfam" id="PF00937">
    <property type="entry name" value="CoV_nucleocap"/>
    <property type="match status" value="1"/>
</dbReference>
<dbReference type="PIRSF" id="PIRSF003888">
    <property type="entry name" value="Corona_nucleocap"/>
    <property type="match status" value="1"/>
</dbReference>
<dbReference type="SUPFAM" id="SSF110304">
    <property type="entry name" value="Coronavirus RNA-binding domain"/>
    <property type="match status" value="1"/>
</dbReference>
<dbReference type="SUPFAM" id="SSF103068">
    <property type="entry name" value="Nucleocapsid protein dimerization domain"/>
    <property type="match status" value="1"/>
</dbReference>
<dbReference type="PROSITE" id="PS51929">
    <property type="entry name" value="COV_N_CTD"/>
    <property type="match status" value="1"/>
</dbReference>
<dbReference type="PROSITE" id="PS51928">
    <property type="entry name" value="COV_N_NTD"/>
    <property type="match status" value="1"/>
</dbReference>
<keyword id="KW-0013">ADP-ribosylation</keyword>
<keyword id="KW-1015">Disulfide bond</keyword>
<keyword id="KW-1040">Host Golgi apparatus</keyword>
<keyword id="KW-0597">Phosphoprotein</keyword>
<keyword id="KW-0687">Ribonucleoprotein</keyword>
<keyword id="KW-0694">RNA-binding</keyword>
<keyword id="KW-0804">Transcription</keyword>
<keyword id="KW-0805">Transcription regulation</keyword>
<keyword id="KW-0543">Viral nucleoprotein</keyword>
<keyword id="KW-0946">Virion</keyword>
<gene>
    <name evidence="1" type="primary">N</name>
    <name type="ORF">6</name>
</gene>
<sequence length="409" mass="45214">MASGKAAGKTDAPTPVIKLGGPKPPKVGSSGNVSWFQAIKAKKLNSPPPKFEGSGVPDNENLKPSQQHGYWRRQARFKPGKGGRKPVPDAWYFYYTGTGPAANLNWGDSQDGIVWVAGKGADTKFRSNQGTRDSDKFDQYPLRFSDGGPDGNFRWDFIPLNRGRSGRSTAASSAASSRAPSREVSRGRRSGSEDDLIARAARIIQDQQKKGSRITKAKADEMAHRRYCKRTIPPNYKVDQVFGPRTKGKEGNFGDDKMNEEGIKDGRVTAMLNLVPSSHACLFGSRVTPRLQPDGLHLKFEFTTVVPRDDPQFDNYVKICDQCVDGVGTRPKDDEPRPKSRSSSRPATRGNSPAPRQQRPKKEKKPKKQDDEVDKALTSDEERNNAQLEFDDEPKVINWGDSALGENEL</sequence>